<sequence length="258" mass="28310">MAKRLDLNDVNIYYGDFHAVQDVNLHIPPKAVTAFIGPSGCGKSTVLRTLNRMHEVIPGAYVKGEILLDGEDIYGPKIDPVAVRNTIGMVFQKANPFPTMSIEENVVAGLKLSGEKNKKKLREVAERALRGANLWDEVKDRLDKPGGGLSGGQQQRLCIARAIAVEPEVLLMDEPCSALDPISTLAVEDLIHELKEDFTIVIVTHNMQQAARVSDQTAFYSLEATGKPGQLVEVGPTKQIFENPTKKETEDYISGRFG</sequence>
<reference key="1">
    <citation type="journal article" date="2005" name="J. Bacteriol.">
        <title>Complete genome sequence and analysis of the multiresistant nosocomial pathogen Corynebacterium jeikeium K411, a lipid-requiring bacterium of the human skin flora.</title>
        <authorList>
            <person name="Tauch A."/>
            <person name="Kaiser O."/>
            <person name="Hain T."/>
            <person name="Goesmann A."/>
            <person name="Weisshaar B."/>
            <person name="Albersmeier A."/>
            <person name="Bekel T."/>
            <person name="Bischoff N."/>
            <person name="Brune I."/>
            <person name="Chakraborty T."/>
            <person name="Kalinowski J."/>
            <person name="Meyer F."/>
            <person name="Rupp O."/>
            <person name="Schneiker S."/>
            <person name="Viehoever P."/>
            <person name="Puehler A."/>
        </authorList>
    </citation>
    <scope>NUCLEOTIDE SEQUENCE [LARGE SCALE GENOMIC DNA]</scope>
    <source>
        <strain>K411</strain>
    </source>
</reference>
<gene>
    <name evidence="1" type="primary">pstB</name>
    <name type="ordered locus">jk0380</name>
</gene>
<name>PSTB_CORJK</name>
<accession>Q4JXC5</accession>
<feature type="chain" id="PRO_0000272442" description="Phosphate import ATP-binding protein PstB">
    <location>
        <begin position="1"/>
        <end position="258"/>
    </location>
</feature>
<feature type="domain" description="ABC transporter" evidence="1">
    <location>
        <begin position="5"/>
        <end position="253"/>
    </location>
</feature>
<feature type="binding site" evidence="1">
    <location>
        <begin position="37"/>
        <end position="44"/>
    </location>
    <ligand>
        <name>ATP</name>
        <dbReference type="ChEBI" id="CHEBI:30616"/>
    </ligand>
</feature>
<keyword id="KW-0067">ATP-binding</keyword>
<keyword id="KW-1003">Cell membrane</keyword>
<keyword id="KW-0472">Membrane</keyword>
<keyword id="KW-0547">Nucleotide-binding</keyword>
<keyword id="KW-0592">Phosphate transport</keyword>
<keyword id="KW-1185">Reference proteome</keyword>
<keyword id="KW-1278">Translocase</keyword>
<keyword id="KW-0813">Transport</keyword>
<protein>
    <recommendedName>
        <fullName evidence="1">Phosphate import ATP-binding protein PstB</fullName>
        <ecNumber evidence="1">7.3.2.1</ecNumber>
    </recommendedName>
    <alternativeName>
        <fullName evidence="1">ABC phosphate transporter</fullName>
    </alternativeName>
    <alternativeName>
        <fullName evidence="1">Phosphate-transporting ATPase</fullName>
    </alternativeName>
</protein>
<organism>
    <name type="scientific">Corynebacterium jeikeium (strain K411)</name>
    <dbReference type="NCBI Taxonomy" id="306537"/>
    <lineage>
        <taxon>Bacteria</taxon>
        <taxon>Bacillati</taxon>
        <taxon>Actinomycetota</taxon>
        <taxon>Actinomycetes</taxon>
        <taxon>Mycobacteriales</taxon>
        <taxon>Corynebacteriaceae</taxon>
        <taxon>Corynebacterium</taxon>
    </lineage>
</organism>
<evidence type="ECO:0000255" key="1">
    <source>
        <dbReference type="HAMAP-Rule" id="MF_01702"/>
    </source>
</evidence>
<proteinExistence type="inferred from homology"/>
<dbReference type="EC" id="7.3.2.1" evidence="1"/>
<dbReference type="EMBL" id="CR931997">
    <property type="protein sequence ID" value="CAI36532.1"/>
    <property type="molecule type" value="Genomic_DNA"/>
</dbReference>
<dbReference type="RefSeq" id="WP_005296618.1">
    <property type="nucleotide sequence ID" value="NC_007164.1"/>
</dbReference>
<dbReference type="SMR" id="Q4JXC5"/>
<dbReference type="STRING" id="306537.jk0380"/>
<dbReference type="GeneID" id="92737868"/>
<dbReference type="KEGG" id="cjk:jk0380"/>
<dbReference type="eggNOG" id="COG1117">
    <property type="taxonomic scope" value="Bacteria"/>
</dbReference>
<dbReference type="HOGENOM" id="CLU_000604_1_22_11"/>
<dbReference type="OrthoDB" id="4398079at2"/>
<dbReference type="Proteomes" id="UP000000545">
    <property type="component" value="Chromosome"/>
</dbReference>
<dbReference type="GO" id="GO:0005886">
    <property type="term" value="C:plasma membrane"/>
    <property type="evidence" value="ECO:0007669"/>
    <property type="project" value="UniProtKB-SubCell"/>
</dbReference>
<dbReference type="GO" id="GO:0005524">
    <property type="term" value="F:ATP binding"/>
    <property type="evidence" value="ECO:0007669"/>
    <property type="project" value="UniProtKB-KW"/>
</dbReference>
<dbReference type="GO" id="GO:0016887">
    <property type="term" value="F:ATP hydrolysis activity"/>
    <property type="evidence" value="ECO:0007669"/>
    <property type="project" value="InterPro"/>
</dbReference>
<dbReference type="GO" id="GO:0015415">
    <property type="term" value="F:ATPase-coupled phosphate ion transmembrane transporter activity"/>
    <property type="evidence" value="ECO:0007669"/>
    <property type="project" value="UniProtKB-EC"/>
</dbReference>
<dbReference type="GO" id="GO:0035435">
    <property type="term" value="P:phosphate ion transmembrane transport"/>
    <property type="evidence" value="ECO:0007669"/>
    <property type="project" value="InterPro"/>
</dbReference>
<dbReference type="CDD" id="cd03260">
    <property type="entry name" value="ABC_PstB_phosphate_transporter"/>
    <property type="match status" value="1"/>
</dbReference>
<dbReference type="Gene3D" id="3.40.50.300">
    <property type="entry name" value="P-loop containing nucleotide triphosphate hydrolases"/>
    <property type="match status" value="1"/>
</dbReference>
<dbReference type="InterPro" id="IPR003593">
    <property type="entry name" value="AAA+_ATPase"/>
</dbReference>
<dbReference type="InterPro" id="IPR003439">
    <property type="entry name" value="ABC_transporter-like_ATP-bd"/>
</dbReference>
<dbReference type="InterPro" id="IPR017871">
    <property type="entry name" value="ABC_transporter-like_CS"/>
</dbReference>
<dbReference type="InterPro" id="IPR027417">
    <property type="entry name" value="P-loop_NTPase"/>
</dbReference>
<dbReference type="InterPro" id="IPR005670">
    <property type="entry name" value="PstB-like"/>
</dbReference>
<dbReference type="NCBIfam" id="TIGR00972">
    <property type="entry name" value="3a0107s01c2"/>
    <property type="match status" value="1"/>
</dbReference>
<dbReference type="PANTHER" id="PTHR43423">
    <property type="entry name" value="ABC TRANSPORTER I FAMILY MEMBER 17"/>
    <property type="match status" value="1"/>
</dbReference>
<dbReference type="PANTHER" id="PTHR43423:SF1">
    <property type="entry name" value="ABC TRANSPORTER I FAMILY MEMBER 17"/>
    <property type="match status" value="1"/>
</dbReference>
<dbReference type="Pfam" id="PF00005">
    <property type="entry name" value="ABC_tran"/>
    <property type="match status" value="1"/>
</dbReference>
<dbReference type="SMART" id="SM00382">
    <property type="entry name" value="AAA"/>
    <property type="match status" value="1"/>
</dbReference>
<dbReference type="SUPFAM" id="SSF52540">
    <property type="entry name" value="P-loop containing nucleoside triphosphate hydrolases"/>
    <property type="match status" value="1"/>
</dbReference>
<dbReference type="PROSITE" id="PS00211">
    <property type="entry name" value="ABC_TRANSPORTER_1"/>
    <property type="match status" value="1"/>
</dbReference>
<dbReference type="PROSITE" id="PS50893">
    <property type="entry name" value="ABC_TRANSPORTER_2"/>
    <property type="match status" value="1"/>
</dbReference>
<dbReference type="PROSITE" id="PS51238">
    <property type="entry name" value="PSTB"/>
    <property type="match status" value="1"/>
</dbReference>
<comment type="function">
    <text evidence="1">Part of the ABC transporter complex PstSACB involved in phosphate import. Responsible for energy coupling to the transport system.</text>
</comment>
<comment type="catalytic activity">
    <reaction evidence="1">
        <text>phosphate(out) + ATP + H2O = ADP + 2 phosphate(in) + H(+)</text>
        <dbReference type="Rhea" id="RHEA:24440"/>
        <dbReference type="ChEBI" id="CHEBI:15377"/>
        <dbReference type="ChEBI" id="CHEBI:15378"/>
        <dbReference type="ChEBI" id="CHEBI:30616"/>
        <dbReference type="ChEBI" id="CHEBI:43474"/>
        <dbReference type="ChEBI" id="CHEBI:456216"/>
        <dbReference type="EC" id="7.3.2.1"/>
    </reaction>
</comment>
<comment type="subunit">
    <text evidence="1">The complex is composed of two ATP-binding proteins (PstB), two transmembrane proteins (PstC and PstA) and a solute-binding protein (PstS).</text>
</comment>
<comment type="subcellular location">
    <subcellularLocation>
        <location evidence="1">Cell membrane</location>
        <topology evidence="1">Peripheral membrane protein</topology>
    </subcellularLocation>
</comment>
<comment type="similarity">
    <text evidence="1">Belongs to the ABC transporter superfamily. Phosphate importer (TC 3.A.1.7) family.</text>
</comment>